<reference key="1">
    <citation type="journal article" date="2010" name="PLoS ONE">
        <title>Genome sequence of Cronobacter sakazakii BAA-894 and comparative genomic hybridization analysis with other Cronobacter species.</title>
        <authorList>
            <person name="Kucerova E."/>
            <person name="Clifton S.W."/>
            <person name="Xia X.Q."/>
            <person name="Long F."/>
            <person name="Porwollik S."/>
            <person name="Fulton L."/>
            <person name="Fronick C."/>
            <person name="Minx P."/>
            <person name="Kyung K."/>
            <person name="Warren W."/>
            <person name="Fulton R."/>
            <person name="Feng D."/>
            <person name="Wollam A."/>
            <person name="Shah N."/>
            <person name="Bhonagiri V."/>
            <person name="Nash W.E."/>
            <person name="Hallsworth-Pepin K."/>
            <person name="Wilson R.K."/>
            <person name="McClelland M."/>
            <person name="Forsythe S.J."/>
        </authorList>
    </citation>
    <scope>NUCLEOTIDE SEQUENCE [LARGE SCALE GENOMIC DNA]</scope>
    <source>
        <strain>ATCC BAA-894</strain>
    </source>
</reference>
<sequence>MINDILEPGLRVVFCGINPGKSSAHTGFHFAHPGNRFWKVIHLAGFTDRQLKPEEERHLLDTRCGITKLVERPTVQANEVDVKELHEGGRNLIKKIEDFQPDALAVLGKKAYEQAFSQRGVKWGKQKLKIGKTEIWVLPNPSGLNRASLDKLVEAYRELDDALVARGR</sequence>
<name>MUG_CROS8</name>
<proteinExistence type="inferred from homology"/>
<gene>
    <name evidence="1" type="primary">mug</name>
    <name type="ordered locus">ESA_00353</name>
</gene>
<evidence type="ECO:0000255" key="1">
    <source>
        <dbReference type="HAMAP-Rule" id="MF_01956"/>
    </source>
</evidence>
<feature type="chain" id="PRO_1000070793" description="G/U mismatch-specific DNA glycosylase">
    <location>
        <begin position="1"/>
        <end position="168"/>
    </location>
</feature>
<organism>
    <name type="scientific">Cronobacter sakazakii (strain ATCC BAA-894)</name>
    <name type="common">Enterobacter sakazakii</name>
    <dbReference type="NCBI Taxonomy" id="290339"/>
    <lineage>
        <taxon>Bacteria</taxon>
        <taxon>Pseudomonadati</taxon>
        <taxon>Pseudomonadota</taxon>
        <taxon>Gammaproteobacteria</taxon>
        <taxon>Enterobacterales</taxon>
        <taxon>Enterobacteriaceae</taxon>
        <taxon>Cronobacter</taxon>
    </lineage>
</organism>
<keyword id="KW-0963">Cytoplasm</keyword>
<keyword id="KW-0227">DNA damage</keyword>
<keyword id="KW-0228">DNA excision</keyword>
<keyword id="KW-0234">DNA repair</keyword>
<keyword id="KW-0238">DNA-binding</keyword>
<keyword id="KW-0378">Hydrolase</keyword>
<keyword id="KW-1185">Reference proteome</keyword>
<dbReference type="EC" id="3.2.2.28" evidence="1"/>
<dbReference type="EMBL" id="CP000783">
    <property type="protein sequence ID" value="ABU75651.1"/>
    <property type="molecule type" value="Genomic_DNA"/>
</dbReference>
<dbReference type="RefSeq" id="WP_004385589.1">
    <property type="nucleotide sequence ID" value="NC_009778.1"/>
</dbReference>
<dbReference type="SMR" id="A7MJU3"/>
<dbReference type="GeneID" id="56733310"/>
<dbReference type="KEGG" id="esa:ESA_00353"/>
<dbReference type="HOGENOM" id="CLU_042829_3_1_6"/>
<dbReference type="Proteomes" id="UP000000260">
    <property type="component" value="Chromosome"/>
</dbReference>
<dbReference type="GO" id="GO:0005737">
    <property type="term" value="C:cytoplasm"/>
    <property type="evidence" value="ECO:0007669"/>
    <property type="project" value="UniProtKB-SubCell"/>
</dbReference>
<dbReference type="GO" id="GO:0003677">
    <property type="term" value="F:DNA binding"/>
    <property type="evidence" value="ECO:0007669"/>
    <property type="project" value="UniProtKB-KW"/>
</dbReference>
<dbReference type="GO" id="GO:0008263">
    <property type="term" value="F:pyrimidine-specific mismatch base pair DNA N-glycosylase activity"/>
    <property type="evidence" value="ECO:0007669"/>
    <property type="project" value="UniProtKB-UniRule"/>
</dbReference>
<dbReference type="GO" id="GO:0004844">
    <property type="term" value="F:uracil DNA N-glycosylase activity"/>
    <property type="evidence" value="ECO:0007669"/>
    <property type="project" value="TreeGrafter"/>
</dbReference>
<dbReference type="GO" id="GO:0006285">
    <property type="term" value="P:base-excision repair, AP site formation"/>
    <property type="evidence" value="ECO:0007669"/>
    <property type="project" value="UniProtKB-UniRule"/>
</dbReference>
<dbReference type="CDD" id="cd10028">
    <property type="entry name" value="UDG-F2_TDG_MUG"/>
    <property type="match status" value="1"/>
</dbReference>
<dbReference type="Gene3D" id="3.40.470.10">
    <property type="entry name" value="Uracil-DNA glycosylase-like domain"/>
    <property type="match status" value="1"/>
</dbReference>
<dbReference type="HAMAP" id="MF_01956">
    <property type="entry name" value="MUG"/>
    <property type="match status" value="1"/>
</dbReference>
<dbReference type="InterPro" id="IPR015637">
    <property type="entry name" value="MUG/TDG"/>
</dbReference>
<dbReference type="InterPro" id="IPR023502">
    <property type="entry name" value="MUG_bact"/>
</dbReference>
<dbReference type="InterPro" id="IPR005122">
    <property type="entry name" value="Uracil-DNA_glycosylase-like"/>
</dbReference>
<dbReference type="InterPro" id="IPR036895">
    <property type="entry name" value="Uracil-DNA_glycosylase-like_sf"/>
</dbReference>
<dbReference type="NCBIfam" id="NF007570">
    <property type="entry name" value="PRK10201.1"/>
    <property type="match status" value="1"/>
</dbReference>
<dbReference type="PANTHER" id="PTHR12159">
    <property type="entry name" value="G/T AND G/U MISMATCH-SPECIFIC DNA GLYCOSYLASE"/>
    <property type="match status" value="1"/>
</dbReference>
<dbReference type="PANTHER" id="PTHR12159:SF9">
    <property type="entry name" value="G_T MISMATCH-SPECIFIC THYMINE DNA GLYCOSYLASE"/>
    <property type="match status" value="1"/>
</dbReference>
<dbReference type="Pfam" id="PF03167">
    <property type="entry name" value="UDG"/>
    <property type="match status" value="1"/>
</dbReference>
<dbReference type="SUPFAM" id="SSF52141">
    <property type="entry name" value="Uracil-DNA glycosylase-like"/>
    <property type="match status" value="1"/>
</dbReference>
<comment type="function">
    <text evidence="1">Excises ethenocytosine and uracil, which can arise by alkylation or deamination of cytosine, respectively, from the corresponding mispairs with guanine in ds-DNA. It is capable of hydrolyzing the carbon-nitrogen bond between the sugar-phosphate backbone of the DNA and the mispaired base. The complementary strand guanine functions in substrate recognition. Required for DNA damage lesion repair in stationary-phase cells.</text>
</comment>
<comment type="catalytic activity">
    <reaction evidence="1">
        <text>Specifically hydrolyzes mismatched double-stranded DNA and polynucleotides, releasing free uracil.</text>
        <dbReference type="EC" id="3.2.2.28"/>
    </reaction>
</comment>
<comment type="subunit">
    <text evidence="1">Binds DNA as a monomer.</text>
</comment>
<comment type="subcellular location">
    <subcellularLocation>
        <location evidence="1">Cytoplasm</location>
    </subcellularLocation>
</comment>
<comment type="similarity">
    <text evidence="1">Belongs to the uracil-DNA glycosylase (UDG) superfamily. TDG/mug family.</text>
</comment>
<accession>A7MJU3</accession>
<protein>
    <recommendedName>
        <fullName evidence="1">G/U mismatch-specific DNA glycosylase</fullName>
        <ecNumber evidence="1">3.2.2.28</ecNumber>
    </recommendedName>
    <alternativeName>
        <fullName evidence="1">Double-strand-specific uracil glycosylase</fullName>
    </alternativeName>
    <alternativeName>
        <fullName evidence="1">Mismatch-specific uracil DNA-glycosylase</fullName>
        <shortName evidence="1">MUG</shortName>
    </alternativeName>
</protein>